<reference key="1">
    <citation type="journal article" date="2012" name="Environ. Microbiol.">
        <title>The genome sequence of Desulfatibacillum alkenivorans AK-01: a blueprint for anaerobic alkane oxidation.</title>
        <authorList>
            <person name="Callaghan A.V."/>
            <person name="Morris B.E."/>
            <person name="Pereira I.A."/>
            <person name="McInerney M.J."/>
            <person name="Austin R.N."/>
            <person name="Groves J.T."/>
            <person name="Kukor J.J."/>
            <person name="Suflita J.M."/>
            <person name="Young L.Y."/>
            <person name="Zylstra G.J."/>
            <person name="Wawrik B."/>
        </authorList>
    </citation>
    <scope>NUCLEOTIDE SEQUENCE [LARGE SCALE GENOMIC DNA]</scope>
    <source>
        <strain>AK-01</strain>
    </source>
</reference>
<evidence type="ECO:0000255" key="1">
    <source>
        <dbReference type="HAMAP-Rule" id="MF_00444"/>
    </source>
</evidence>
<organism>
    <name type="scientific">Desulfatibacillum aliphaticivorans</name>
    <dbReference type="NCBI Taxonomy" id="218208"/>
    <lineage>
        <taxon>Bacteria</taxon>
        <taxon>Pseudomonadati</taxon>
        <taxon>Thermodesulfobacteriota</taxon>
        <taxon>Desulfobacteria</taxon>
        <taxon>Desulfobacterales</taxon>
        <taxon>Desulfatibacillaceae</taxon>
        <taxon>Desulfatibacillum</taxon>
    </lineage>
</organism>
<protein>
    <recommendedName>
        <fullName evidence="1">ATP-dependent Clp protease proteolytic subunit</fullName>
        <ecNumber evidence="1">3.4.21.92</ecNumber>
    </recommendedName>
    <alternativeName>
        <fullName evidence="1">Endopeptidase Clp</fullName>
    </alternativeName>
</protein>
<sequence>MSYIPYVVEQTSRGERTYDIYSRLLKDRIIFLGTEVNDVVANSIIAQLLFLESDDPEKDINFYINSPGGSVTAGMAIYDTMAYIKPEITTVCIGQAASMGAVLLAAGNHGKRYSLPNARILIHQPMGGFQGQASDIAIQAQEILRMKEALNEILASHTGKPLKQVQQDTDRDYFMSPLEAKEYGLIDHVILNREDLDSIEE</sequence>
<proteinExistence type="inferred from homology"/>
<accession>B8FA62</accession>
<name>CLPP_DESAL</name>
<gene>
    <name evidence="1" type="primary">clpP</name>
    <name type="ordered locus">Dalk_1458</name>
</gene>
<dbReference type="EC" id="3.4.21.92" evidence="1"/>
<dbReference type="EMBL" id="CP001322">
    <property type="protein sequence ID" value="ACL03158.1"/>
    <property type="molecule type" value="Genomic_DNA"/>
</dbReference>
<dbReference type="RefSeq" id="WP_012610593.1">
    <property type="nucleotide sequence ID" value="NC_011768.1"/>
</dbReference>
<dbReference type="SMR" id="B8FA62"/>
<dbReference type="MEROPS" id="S14.001"/>
<dbReference type="KEGG" id="dal:Dalk_1458"/>
<dbReference type="eggNOG" id="COG0740">
    <property type="taxonomic scope" value="Bacteria"/>
</dbReference>
<dbReference type="HOGENOM" id="CLU_058707_3_2_7"/>
<dbReference type="Proteomes" id="UP000000739">
    <property type="component" value="Chromosome"/>
</dbReference>
<dbReference type="GO" id="GO:0005737">
    <property type="term" value="C:cytoplasm"/>
    <property type="evidence" value="ECO:0007669"/>
    <property type="project" value="UniProtKB-SubCell"/>
</dbReference>
<dbReference type="GO" id="GO:0009368">
    <property type="term" value="C:endopeptidase Clp complex"/>
    <property type="evidence" value="ECO:0007669"/>
    <property type="project" value="TreeGrafter"/>
</dbReference>
<dbReference type="GO" id="GO:0004176">
    <property type="term" value="F:ATP-dependent peptidase activity"/>
    <property type="evidence" value="ECO:0007669"/>
    <property type="project" value="InterPro"/>
</dbReference>
<dbReference type="GO" id="GO:0051117">
    <property type="term" value="F:ATPase binding"/>
    <property type="evidence" value="ECO:0007669"/>
    <property type="project" value="TreeGrafter"/>
</dbReference>
<dbReference type="GO" id="GO:0004252">
    <property type="term" value="F:serine-type endopeptidase activity"/>
    <property type="evidence" value="ECO:0007669"/>
    <property type="project" value="UniProtKB-UniRule"/>
</dbReference>
<dbReference type="GO" id="GO:0006515">
    <property type="term" value="P:protein quality control for misfolded or incompletely synthesized proteins"/>
    <property type="evidence" value="ECO:0007669"/>
    <property type="project" value="TreeGrafter"/>
</dbReference>
<dbReference type="CDD" id="cd07017">
    <property type="entry name" value="S14_ClpP_2"/>
    <property type="match status" value="1"/>
</dbReference>
<dbReference type="FunFam" id="3.90.226.10:FF:000001">
    <property type="entry name" value="ATP-dependent Clp protease proteolytic subunit"/>
    <property type="match status" value="1"/>
</dbReference>
<dbReference type="Gene3D" id="3.90.226.10">
    <property type="entry name" value="2-enoyl-CoA Hydratase, Chain A, domain 1"/>
    <property type="match status" value="1"/>
</dbReference>
<dbReference type="HAMAP" id="MF_00444">
    <property type="entry name" value="ClpP"/>
    <property type="match status" value="1"/>
</dbReference>
<dbReference type="InterPro" id="IPR001907">
    <property type="entry name" value="ClpP"/>
</dbReference>
<dbReference type="InterPro" id="IPR029045">
    <property type="entry name" value="ClpP/crotonase-like_dom_sf"/>
</dbReference>
<dbReference type="InterPro" id="IPR023562">
    <property type="entry name" value="ClpP/TepA"/>
</dbReference>
<dbReference type="InterPro" id="IPR033135">
    <property type="entry name" value="ClpP_His_AS"/>
</dbReference>
<dbReference type="InterPro" id="IPR018215">
    <property type="entry name" value="ClpP_Ser_AS"/>
</dbReference>
<dbReference type="NCBIfam" id="TIGR00493">
    <property type="entry name" value="clpP"/>
    <property type="match status" value="1"/>
</dbReference>
<dbReference type="NCBIfam" id="NF001368">
    <property type="entry name" value="PRK00277.1"/>
    <property type="match status" value="1"/>
</dbReference>
<dbReference type="NCBIfam" id="NF009205">
    <property type="entry name" value="PRK12553.1"/>
    <property type="match status" value="1"/>
</dbReference>
<dbReference type="PANTHER" id="PTHR10381">
    <property type="entry name" value="ATP-DEPENDENT CLP PROTEASE PROTEOLYTIC SUBUNIT"/>
    <property type="match status" value="1"/>
</dbReference>
<dbReference type="PANTHER" id="PTHR10381:SF70">
    <property type="entry name" value="ATP-DEPENDENT CLP PROTEASE PROTEOLYTIC SUBUNIT"/>
    <property type="match status" value="1"/>
</dbReference>
<dbReference type="Pfam" id="PF00574">
    <property type="entry name" value="CLP_protease"/>
    <property type="match status" value="1"/>
</dbReference>
<dbReference type="PRINTS" id="PR00127">
    <property type="entry name" value="CLPPROTEASEP"/>
</dbReference>
<dbReference type="SUPFAM" id="SSF52096">
    <property type="entry name" value="ClpP/crotonase"/>
    <property type="match status" value="1"/>
</dbReference>
<dbReference type="PROSITE" id="PS00382">
    <property type="entry name" value="CLP_PROTEASE_HIS"/>
    <property type="match status" value="1"/>
</dbReference>
<dbReference type="PROSITE" id="PS00381">
    <property type="entry name" value="CLP_PROTEASE_SER"/>
    <property type="match status" value="1"/>
</dbReference>
<keyword id="KW-0963">Cytoplasm</keyword>
<keyword id="KW-0378">Hydrolase</keyword>
<keyword id="KW-0645">Protease</keyword>
<keyword id="KW-1185">Reference proteome</keyword>
<keyword id="KW-0720">Serine protease</keyword>
<feature type="chain" id="PRO_1000206144" description="ATP-dependent Clp protease proteolytic subunit">
    <location>
        <begin position="1"/>
        <end position="201"/>
    </location>
</feature>
<feature type="active site" description="Nucleophile" evidence="1">
    <location>
        <position position="98"/>
    </location>
</feature>
<feature type="active site" evidence="1">
    <location>
        <position position="123"/>
    </location>
</feature>
<comment type="function">
    <text evidence="1">Cleaves peptides in various proteins in a process that requires ATP hydrolysis. Has a chymotrypsin-like activity. Plays a major role in the degradation of misfolded proteins.</text>
</comment>
<comment type="catalytic activity">
    <reaction evidence="1">
        <text>Hydrolysis of proteins to small peptides in the presence of ATP and magnesium. alpha-casein is the usual test substrate. In the absence of ATP, only oligopeptides shorter than five residues are hydrolyzed (such as succinyl-Leu-Tyr-|-NHMec, and Leu-Tyr-Leu-|-Tyr-Trp, in which cleavage of the -Tyr-|-Leu- and -Tyr-|-Trp bonds also occurs).</text>
        <dbReference type="EC" id="3.4.21.92"/>
    </reaction>
</comment>
<comment type="subunit">
    <text evidence="1">Fourteen ClpP subunits assemble into 2 heptameric rings which stack back to back to give a disk-like structure with a central cavity, resembling the structure of eukaryotic proteasomes.</text>
</comment>
<comment type="subcellular location">
    <subcellularLocation>
        <location evidence="1">Cytoplasm</location>
    </subcellularLocation>
</comment>
<comment type="similarity">
    <text evidence="1">Belongs to the peptidase S14 family.</text>
</comment>